<evidence type="ECO:0000255" key="1">
    <source>
        <dbReference type="HAMAP-Rule" id="MF_00020"/>
    </source>
</evidence>
<keyword id="KW-0067">ATP-binding</keyword>
<keyword id="KW-0963">Cytoplasm</keyword>
<keyword id="KW-0418">Kinase</keyword>
<keyword id="KW-0460">Magnesium</keyword>
<keyword id="KW-0479">Metal-binding</keyword>
<keyword id="KW-0547">Nucleotide-binding</keyword>
<keyword id="KW-1185">Reference proteome</keyword>
<keyword id="KW-0808">Transferase</keyword>
<dbReference type="EC" id="2.7.2.1" evidence="1"/>
<dbReference type="EMBL" id="CP000673">
    <property type="protein sequence ID" value="EDK33433.1"/>
    <property type="molecule type" value="Genomic_DNA"/>
</dbReference>
<dbReference type="RefSeq" id="WP_012101780.1">
    <property type="nucleotide sequence ID" value="NC_009706.1"/>
</dbReference>
<dbReference type="SMR" id="A5N802"/>
<dbReference type="STRING" id="431943.CKL_1391"/>
<dbReference type="KEGG" id="ckl:CKL_1391"/>
<dbReference type="eggNOG" id="COG0282">
    <property type="taxonomic scope" value="Bacteria"/>
</dbReference>
<dbReference type="HOGENOM" id="CLU_020352_0_1_9"/>
<dbReference type="BioCyc" id="MetaCyc:MONOMER-13473"/>
<dbReference type="UniPathway" id="UPA00340">
    <property type="reaction ID" value="UER00458"/>
</dbReference>
<dbReference type="Proteomes" id="UP000002411">
    <property type="component" value="Chromosome"/>
</dbReference>
<dbReference type="GO" id="GO:0005737">
    <property type="term" value="C:cytoplasm"/>
    <property type="evidence" value="ECO:0007669"/>
    <property type="project" value="UniProtKB-SubCell"/>
</dbReference>
<dbReference type="GO" id="GO:0008776">
    <property type="term" value="F:acetate kinase activity"/>
    <property type="evidence" value="ECO:0007669"/>
    <property type="project" value="UniProtKB-UniRule"/>
</dbReference>
<dbReference type="GO" id="GO:0005524">
    <property type="term" value="F:ATP binding"/>
    <property type="evidence" value="ECO:0007669"/>
    <property type="project" value="UniProtKB-KW"/>
</dbReference>
<dbReference type="GO" id="GO:0000287">
    <property type="term" value="F:magnesium ion binding"/>
    <property type="evidence" value="ECO:0007669"/>
    <property type="project" value="UniProtKB-UniRule"/>
</dbReference>
<dbReference type="GO" id="GO:0006083">
    <property type="term" value="P:acetate metabolic process"/>
    <property type="evidence" value="ECO:0007669"/>
    <property type="project" value="TreeGrafter"/>
</dbReference>
<dbReference type="GO" id="GO:0006085">
    <property type="term" value="P:acetyl-CoA biosynthetic process"/>
    <property type="evidence" value="ECO:0007669"/>
    <property type="project" value="UniProtKB-UniRule"/>
</dbReference>
<dbReference type="CDD" id="cd24010">
    <property type="entry name" value="ASKHA_NBD_AcK_PK"/>
    <property type="match status" value="1"/>
</dbReference>
<dbReference type="Gene3D" id="3.30.420.40">
    <property type="match status" value="2"/>
</dbReference>
<dbReference type="HAMAP" id="MF_00020">
    <property type="entry name" value="Acetate_kinase"/>
    <property type="match status" value="1"/>
</dbReference>
<dbReference type="InterPro" id="IPR004372">
    <property type="entry name" value="Ac/propionate_kinase"/>
</dbReference>
<dbReference type="InterPro" id="IPR000890">
    <property type="entry name" value="Aliphatic_acid_kin_short-chain"/>
</dbReference>
<dbReference type="InterPro" id="IPR023865">
    <property type="entry name" value="Aliphatic_acid_kinase_CS"/>
</dbReference>
<dbReference type="InterPro" id="IPR043129">
    <property type="entry name" value="ATPase_NBD"/>
</dbReference>
<dbReference type="NCBIfam" id="TIGR00016">
    <property type="entry name" value="ackA"/>
    <property type="match status" value="1"/>
</dbReference>
<dbReference type="PANTHER" id="PTHR21060">
    <property type="entry name" value="ACETATE KINASE"/>
    <property type="match status" value="1"/>
</dbReference>
<dbReference type="PANTHER" id="PTHR21060:SF15">
    <property type="entry name" value="ACETATE KINASE-RELATED"/>
    <property type="match status" value="1"/>
</dbReference>
<dbReference type="Pfam" id="PF00871">
    <property type="entry name" value="Acetate_kinase"/>
    <property type="match status" value="1"/>
</dbReference>
<dbReference type="PIRSF" id="PIRSF000722">
    <property type="entry name" value="Acetate_prop_kin"/>
    <property type="match status" value="1"/>
</dbReference>
<dbReference type="PRINTS" id="PR00471">
    <property type="entry name" value="ACETATEKNASE"/>
</dbReference>
<dbReference type="SUPFAM" id="SSF53067">
    <property type="entry name" value="Actin-like ATPase domain"/>
    <property type="match status" value="2"/>
</dbReference>
<dbReference type="PROSITE" id="PS01075">
    <property type="entry name" value="ACETATE_KINASE_1"/>
    <property type="match status" value="1"/>
</dbReference>
<dbReference type="PROSITE" id="PS01076">
    <property type="entry name" value="ACETATE_KINASE_2"/>
    <property type="match status" value="1"/>
</dbReference>
<feature type="chain" id="PRO_1000074184" description="Acetate kinase">
    <location>
        <begin position="1"/>
        <end position="405"/>
    </location>
</feature>
<feature type="active site" description="Proton donor/acceptor" evidence="1">
    <location>
        <position position="147"/>
    </location>
</feature>
<feature type="binding site" evidence="1">
    <location>
        <position position="7"/>
    </location>
    <ligand>
        <name>Mg(2+)</name>
        <dbReference type="ChEBI" id="CHEBI:18420"/>
    </ligand>
</feature>
<feature type="binding site" evidence="1">
    <location>
        <position position="14"/>
    </location>
    <ligand>
        <name>ATP</name>
        <dbReference type="ChEBI" id="CHEBI:30616"/>
    </ligand>
</feature>
<feature type="binding site" evidence="1">
    <location>
        <position position="90"/>
    </location>
    <ligand>
        <name>substrate</name>
    </ligand>
</feature>
<feature type="binding site" evidence="1">
    <location>
        <begin position="207"/>
        <end position="211"/>
    </location>
    <ligand>
        <name>ATP</name>
        <dbReference type="ChEBI" id="CHEBI:30616"/>
    </ligand>
</feature>
<feature type="binding site" evidence="1">
    <location>
        <begin position="282"/>
        <end position="284"/>
    </location>
    <ligand>
        <name>ATP</name>
        <dbReference type="ChEBI" id="CHEBI:30616"/>
    </ligand>
</feature>
<feature type="binding site" evidence="1">
    <location>
        <begin position="331"/>
        <end position="335"/>
    </location>
    <ligand>
        <name>ATP</name>
        <dbReference type="ChEBI" id="CHEBI:30616"/>
    </ligand>
</feature>
<feature type="binding site" evidence="1">
    <location>
        <position position="384"/>
    </location>
    <ligand>
        <name>Mg(2+)</name>
        <dbReference type="ChEBI" id="CHEBI:18420"/>
    </ligand>
</feature>
<feature type="site" description="Transition state stabilizer" evidence="1">
    <location>
        <position position="179"/>
    </location>
</feature>
<feature type="site" description="Transition state stabilizer" evidence="1">
    <location>
        <position position="240"/>
    </location>
</feature>
<gene>
    <name evidence="1" type="primary">ackA</name>
    <name type="ordered locus">CKL_1391</name>
</gene>
<accession>A5N802</accession>
<sequence length="405" mass="44449">MKILEVNCGSSSLKYQLIDMEDEKVLAKGLVERIGIDGSILTHKVNGEKHVVSEPIKDHRVAVKLVLEALVDKQHGVIKDMSEISAVGHRVVHGGEQYSDAVIIDDKVMESLKDCSKLAPLHNPPNIIGINACKAIMPNTPMVAVFDTAFHHTMPKYAYIYPLPYELYERYGIRKYGFHGTSHRFVSEEAARLMGKDISELKIITCHLGNGASICAVDRGKSIDTNMGFTPLAGLAMGTRCGDIDPAIIPFLTNEIGMSIDEISNIMNNKSGILGMSGISSDFRDVEEIASFKHDRRAQLALDVFYYRVKSFIGSYVAVLDGVDAIVFTAGVGENSSIGRAEICSGLTYLGITIDEEKNNIRGKATEITTANSKTKVFVIPTNEELVIARDTKFLVQKKISHKSK</sequence>
<organism>
    <name type="scientific">Clostridium kluyveri (strain ATCC 8527 / DSM 555 / NBRC 12016 / NCIMB 10680 / K1)</name>
    <dbReference type="NCBI Taxonomy" id="431943"/>
    <lineage>
        <taxon>Bacteria</taxon>
        <taxon>Bacillati</taxon>
        <taxon>Bacillota</taxon>
        <taxon>Clostridia</taxon>
        <taxon>Eubacteriales</taxon>
        <taxon>Clostridiaceae</taxon>
        <taxon>Clostridium</taxon>
    </lineage>
</organism>
<name>ACKA_CLOK5</name>
<reference key="1">
    <citation type="journal article" date="2008" name="Proc. Natl. Acad. Sci. U.S.A.">
        <title>The genome of Clostridium kluyveri, a strict anaerobe with unique metabolic features.</title>
        <authorList>
            <person name="Seedorf H."/>
            <person name="Fricke W.F."/>
            <person name="Veith B."/>
            <person name="Brueggemann H."/>
            <person name="Liesegang H."/>
            <person name="Strittmatter A."/>
            <person name="Miethke M."/>
            <person name="Buckel W."/>
            <person name="Hinderberger J."/>
            <person name="Li F."/>
            <person name="Hagemeier C."/>
            <person name="Thauer R.K."/>
            <person name="Gottschalk G."/>
        </authorList>
    </citation>
    <scope>NUCLEOTIDE SEQUENCE [LARGE SCALE GENOMIC DNA]</scope>
    <source>
        <strain>ATCC 8527 / DSM 555 / NBRC 12016 / NCIMB 10680 / K1</strain>
    </source>
</reference>
<comment type="function">
    <text evidence="1">Catalyzes the formation of acetyl phosphate from acetate and ATP. Can also catalyze the reverse reaction.</text>
</comment>
<comment type="catalytic activity">
    <reaction evidence="1">
        <text>acetate + ATP = acetyl phosphate + ADP</text>
        <dbReference type="Rhea" id="RHEA:11352"/>
        <dbReference type="ChEBI" id="CHEBI:22191"/>
        <dbReference type="ChEBI" id="CHEBI:30089"/>
        <dbReference type="ChEBI" id="CHEBI:30616"/>
        <dbReference type="ChEBI" id="CHEBI:456216"/>
        <dbReference type="EC" id="2.7.2.1"/>
    </reaction>
</comment>
<comment type="cofactor">
    <cofactor evidence="1">
        <name>Mg(2+)</name>
        <dbReference type="ChEBI" id="CHEBI:18420"/>
    </cofactor>
    <cofactor evidence="1">
        <name>Mn(2+)</name>
        <dbReference type="ChEBI" id="CHEBI:29035"/>
    </cofactor>
    <text evidence="1">Mg(2+). Can also accept Mn(2+).</text>
</comment>
<comment type="pathway">
    <text evidence="1">Metabolic intermediate biosynthesis; acetyl-CoA biosynthesis; acetyl-CoA from acetate: step 1/2.</text>
</comment>
<comment type="subunit">
    <text evidence="1">Homodimer.</text>
</comment>
<comment type="subcellular location">
    <subcellularLocation>
        <location evidence="1">Cytoplasm</location>
    </subcellularLocation>
</comment>
<comment type="similarity">
    <text evidence="1">Belongs to the acetokinase family.</text>
</comment>
<protein>
    <recommendedName>
        <fullName evidence="1">Acetate kinase</fullName>
        <ecNumber evidence="1">2.7.2.1</ecNumber>
    </recommendedName>
    <alternativeName>
        <fullName evidence="1">Acetokinase</fullName>
    </alternativeName>
</protein>
<proteinExistence type="inferred from homology"/>